<accession>P61107</accession>
<accession>P35287</accession>
<accession>Q969L0</accession>
<accession>Q9UI11</accession>
<protein>
    <recommendedName>
        <fullName>Ras-related protein Rab-14</fullName>
        <ecNumber evidence="2">3.6.5.2</ecNumber>
    </recommendedName>
</protein>
<feature type="initiator methionine" description="Removed" evidence="2">
    <location>
        <position position="1"/>
    </location>
</feature>
<feature type="chain" id="PRO_0000121187" description="Ras-related protein Rab-14">
    <location>
        <begin position="2"/>
        <end position="215"/>
    </location>
</feature>
<feature type="region of interest" description="Disordered" evidence="4">
    <location>
        <begin position="188"/>
        <end position="215"/>
    </location>
</feature>
<feature type="short sequence motif" description="Switch 1" evidence="2">
    <location>
        <begin position="42"/>
        <end position="47"/>
    </location>
</feature>
<feature type="short sequence motif" description="Switch 2" evidence="2">
    <location>
        <begin position="68"/>
        <end position="77"/>
    </location>
</feature>
<feature type="binding site" evidence="2">
    <location>
        <position position="21"/>
    </location>
    <ligand>
        <name>GTP</name>
        <dbReference type="ChEBI" id="CHEBI:37565"/>
    </ligand>
</feature>
<feature type="binding site" evidence="2">
    <location>
        <position position="22"/>
    </location>
    <ligand>
        <name>GTP</name>
        <dbReference type="ChEBI" id="CHEBI:37565"/>
    </ligand>
</feature>
<feature type="binding site" evidence="2">
    <location>
        <position position="23"/>
    </location>
    <ligand>
        <name>GTP</name>
        <dbReference type="ChEBI" id="CHEBI:37565"/>
    </ligand>
</feature>
<feature type="binding site" evidence="2">
    <location>
        <position position="24"/>
    </location>
    <ligand>
        <name>GTP</name>
        <dbReference type="ChEBI" id="CHEBI:37565"/>
    </ligand>
</feature>
<feature type="binding site" evidence="2">
    <location>
        <position position="25"/>
    </location>
    <ligand>
        <name>GTP</name>
        <dbReference type="ChEBI" id="CHEBI:37565"/>
    </ligand>
</feature>
<feature type="binding site" evidence="2">
    <location>
        <position position="25"/>
    </location>
    <ligand>
        <name>Mg(2+)</name>
        <dbReference type="ChEBI" id="CHEBI:18420"/>
    </ligand>
</feature>
<feature type="binding site" evidence="2">
    <location>
        <position position="26"/>
    </location>
    <ligand>
        <name>GTP</name>
        <dbReference type="ChEBI" id="CHEBI:37565"/>
    </ligand>
</feature>
<feature type="binding site" evidence="2">
    <location>
        <position position="38"/>
    </location>
    <ligand>
        <name>GTP</name>
        <dbReference type="ChEBI" id="CHEBI:37565"/>
    </ligand>
</feature>
<feature type="binding site" evidence="2">
    <location>
        <position position="39"/>
    </location>
    <ligand>
        <name>GTP</name>
        <dbReference type="ChEBI" id="CHEBI:37565"/>
    </ligand>
</feature>
<feature type="binding site" evidence="2">
    <location>
        <position position="40"/>
    </location>
    <ligand>
        <name>GTP</name>
        <dbReference type="ChEBI" id="CHEBI:37565"/>
    </ligand>
</feature>
<feature type="binding site" evidence="2">
    <location>
        <position position="42"/>
    </location>
    <ligand>
        <name>GTP</name>
        <dbReference type="ChEBI" id="CHEBI:37565"/>
    </ligand>
</feature>
<feature type="binding site" evidence="2">
    <location>
        <position position="43"/>
    </location>
    <ligand>
        <name>GTP</name>
        <dbReference type="ChEBI" id="CHEBI:37565"/>
    </ligand>
</feature>
<feature type="binding site" evidence="2">
    <location>
        <position position="43"/>
    </location>
    <ligand>
        <name>Mg(2+)</name>
        <dbReference type="ChEBI" id="CHEBI:18420"/>
    </ligand>
</feature>
<feature type="binding site" evidence="2">
    <location>
        <position position="66"/>
    </location>
    <ligand>
        <name>Mg(2+)</name>
        <dbReference type="ChEBI" id="CHEBI:18420"/>
    </ligand>
</feature>
<feature type="binding site" evidence="2">
    <location>
        <position position="69"/>
    </location>
    <ligand>
        <name>GTP</name>
        <dbReference type="ChEBI" id="CHEBI:37565"/>
    </ligand>
</feature>
<feature type="binding site" evidence="2">
    <location>
        <position position="124"/>
    </location>
    <ligand>
        <name>GTP</name>
        <dbReference type="ChEBI" id="CHEBI:37565"/>
    </ligand>
</feature>
<feature type="binding site" evidence="2">
    <location>
        <position position="125"/>
    </location>
    <ligand>
        <name>GTP</name>
        <dbReference type="ChEBI" id="CHEBI:37565"/>
    </ligand>
</feature>
<feature type="binding site" evidence="2">
    <location>
        <position position="127"/>
    </location>
    <ligand>
        <name>GTP</name>
        <dbReference type="ChEBI" id="CHEBI:37565"/>
    </ligand>
</feature>
<feature type="binding site" evidence="2">
    <location>
        <position position="155"/>
    </location>
    <ligand>
        <name>GTP</name>
        <dbReference type="ChEBI" id="CHEBI:37565"/>
    </ligand>
</feature>
<feature type="binding site" evidence="2">
    <location>
        <position position="156"/>
    </location>
    <ligand>
        <name>GTP</name>
        <dbReference type="ChEBI" id="CHEBI:37565"/>
    </ligand>
</feature>
<feature type="modified residue" description="N-acetylalanine" evidence="2">
    <location>
        <position position="2"/>
    </location>
</feature>
<feature type="modified residue" description="Cysteine methyl ester" evidence="1">
    <location>
        <position position="215"/>
    </location>
</feature>
<feature type="lipid moiety-binding region" description="S-geranylgeranyl cysteine" evidence="1">
    <location>
        <position position="213"/>
    </location>
</feature>
<feature type="lipid moiety-binding region" description="S-geranylgeranyl cysteine" evidence="1">
    <location>
        <position position="215"/>
    </location>
</feature>
<feature type="mutagenesis site" description="Mimicks the GTP-bound state and is enriched in the Golgi region." evidence="5">
    <original>S</original>
    <variation>N</variation>
    <location>
        <position position="25"/>
    </location>
</feature>
<feature type="mutagenesis site" description="Mimicks the GDP-bound state." evidence="5">
    <original>Q</original>
    <variation>L</variation>
    <location>
        <position position="70"/>
    </location>
</feature>
<feature type="mutagenesis site" description="Enriched in the Golgi region." evidence="5">
    <original>N</original>
    <variation>I</variation>
    <location>
        <position position="124"/>
    </location>
</feature>
<comment type="function">
    <text evidence="2 3 5">The small GTPases Rab are key regulators of intracellular membrane trafficking, from the formation of transport vesicles to their fusion with membranes. Rabs cycle between an inactive GDP-bound form and an active GTP-bound form that is able to recruit to membranes different set of downstream effectors directly responsible for vesicle formation, movement, tethering and fusion (By similarity). Involved in membrane trafficking between the Golgi complex and endosomes during early embryonic development (PubMed:15004230). Regulates the Golgi to endosome transport of FGFR-containing vesicles during early development, a key process for developing basement membrane and epiblast and primitive endoderm lineages during early postimplantation development. May act by modulating the kinesin KIF16B-cargo association to endosomes (By similarity). Regulates, together with its guanine nucleotide exchange factor DENND6A, the specific endocytic transport of ADAM10, N-cadherin/CDH2 shedding and cell-cell adhesion. Mediates endosomal tethering and fusion through the interaction with RUFY1 and RAB4B (By similarity). Interaction with RAB11FIP1 may function in the process of neurite formation (By similarity).</text>
</comment>
<comment type="catalytic activity">
    <reaction evidence="2">
        <text>GTP + H2O = GDP + phosphate + H(+)</text>
        <dbReference type="Rhea" id="RHEA:19669"/>
        <dbReference type="ChEBI" id="CHEBI:15377"/>
        <dbReference type="ChEBI" id="CHEBI:15378"/>
        <dbReference type="ChEBI" id="CHEBI:37565"/>
        <dbReference type="ChEBI" id="CHEBI:43474"/>
        <dbReference type="ChEBI" id="CHEBI:58189"/>
        <dbReference type="EC" id="3.6.5.2"/>
    </reaction>
    <physiologicalReaction direction="left-to-right" evidence="2">
        <dbReference type="Rhea" id="RHEA:19670"/>
    </physiologicalReaction>
</comment>
<comment type="cofactor">
    <cofactor evidence="2">
        <name>Mg(2+)</name>
        <dbReference type="ChEBI" id="CHEBI:18420"/>
    </cofactor>
</comment>
<comment type="activity regulation">
    <text evidence="2">Regulated by guanine nucleotide exchange factors (GEFs) including DENND6A and DENND6B which promote the exchange of bound GDP for free GTP. Regulated by GTPase activating proteins (GAPs) which increase the GTP hydrolysis activity. Inhibited by GDP dissociation inhibitors (GDIs) which prevent Rab-GDP dissociation.</text>
</comment>
<comment type="subunit">
    <text evidence="2">Interacts with ZFYVE20. Interacts with KIF16B. Interacts (GTP-bound form) with RUFY1; the interaction recruits RUFY1 onto endosomal membranes. Interacts (GTP-bound form) with RAB11FIP1 (via its C-terminus); the interactions doesn't mediate RAB11FIP1 rectruitment to membranes (By similarity). Interacts with RAB11FIP2 (By similarity).</text>
</comment>
<comment type="interaction">
    <interactant intactId="EBI-917845">
        <id>P61107</id>
    </interactant>
    <interactant intactId="EBI-2688731">
        <id>Q9Y2I1</id>
        <label>NISCH</label>
    </interactant>
    <organismsDiffer>true</organismsDiffer>
    <experiments>9</experiments>
</comment>
<comment type="subcellular location">
    <subcellularLocation>
        <location evidence="2">Recycling endosome</location>
    </subcellularLocation>
    <subcellularLocation>
        <location evidence="5">Early endosome membrane</location>
        <topology evidence="7">Lipid-anchor</topology>
        <orientation evidence="7">Cytoplasmic side</orientation>
    </subcellularLocation>
    <subcellularLocation>
        <location evidence="5">Golgi apparatus membrane</location>
        <topology evidence="7">Lipid-anchor</topology>
        <orientation evidence="7">Cytoplasmic side</orientation>
    </subcellularLocation>
    <subcellularLocation>
        <location evidence="5">Golgi apparatus</location>
        <location evidence="5">trans-Golgi network membrane</location>
        <topology evidence="7">Lipid-anchor</topology>
        <orientation evidence="7">Cytoplasmic side</orientation>
    </subcellularLocation>
    <subcellularLocation>
        <location evidence="2">Cytoplasmic vesicle</location>
        <location evidence="2">Phagosome</location>
    </subcellularLocation>
    <text evidence="2">Recruited to recycling endosomes by DENND6A.</text>
</comment>
<comment type="tissue specificity">
    <text>Widely expressed (at protein level). Highest levels found in whole brain, spinal cord, heart, kidney and lung.</text>
</comment>
<comment type="domain">
    <text evidence="2">Switch 1, switch 2 and the interswitch regions are characteristic of Rab GTPases and mediate the interactions with Rab downstream effectors. The switch regions undergo conformational changes upon nucleotide binding which drives interaction with specific sets of effector proteins, with most effectors only binding to GTP-bound Rab.</text>
</comment>
<comment type="similarity">
    <text evidence="6">Belongs to the small GTPase superfamily. Rab family.</text>
</comment>
<gene>
    <name evidence="8" type="primary">Rab14</name>
</gene>
<organism>
    <name type="scientific">Rattus norvegicus</name>
    <name type="common">Rat</name>
    <dbReference type="NCBI Taxonomy" id="10116"/>
    <lineage>
        <taxon>Eukaryota</taxon>
        <taxon>Metazoa</taxon>
        <taxon>Chordata</taxon>
        <taxon>Craniata</taxon>
        <taxon>Vertebrata</taxon>
        <taxon>Euteleostomi</taxon>
        <taxon>Mammalia</taxon>
        <taxon>Eutheria</taxon>
        <taxon>Euarchontoglires</taxon>
        <taxon>Glires</taxon>
        <taxon>Rodentia</taxon>
        <taxon>Myomorpha</taxon>
        <taxon>Muroidea</taxon>
        <taxon>Muridae</taxon>
        <taxon>Murinae</taxon>
        <taxon>Rattus</taxon>
    </lineage>
</organism>
<keyword id="KW-0007">Acetylation</keyword>
<keyword id="KW-0968">Cytoplasmic vesicle</keyword>
<keyword id="KW-0967">Endosome</keyword>
<keyword id="KW-0333">Golgi apparatus</keyword>
<keyword id="KW-0342">GTP-binding</keyword>
<keyword id="KW-0378">Hydrolase</keyword>
<keyword id="KW-0449">Lipoprotein</keyword>
<keyword id="KW-0460">Magnesium</keyword>
<keyword id="KW-0472">Membrane</keyword>
<keyword id="KW-0479">Metal-binding</keyword>
<keyword id="KW-0488">Methylation</keyword>
<keyword id="KW-0547">Nucleotide-binding</keyword>
<keyword id="KW-0636">Prenylation</keyword>
<keyword id="KW-0653">Protein transport</keyword>
<keyword id="KW-1185">Reference proteome</keyword>
<keyword id="KW-0813">Transport</keyword>
<evidence type="ECO:0000250" key="1"/>
<evidence type="ECO:0000250" key="2">
    <source>
        <dbReference type="UniProtKB" id="P61106"/>
    </source>
</evidence>
<evidence type="ECO:0000250" key="3">
    <source>
        <dbReference type="UniProtKB" id="Q91V41"/>
    </source>
</evidence>
<evidence type="ECO:0000256" key="4">
    <source>
        <dbReference type="SAM" id="MobiDB-lite"/>
    </source>
</evidence>
<evidence type="ECO:0000269" key="5">
    <source>
    </source>
</evidence>
<evidence type="ECO:0000305" key="6"/>
<evidence type="ECO:0000305" key="7">
    <source>
    </source>
</evidence>
<evidence type="ECO:0000312" key="8">
    <source>
        <dbReference type="RGD" id="620881"/>
    </source>
</evidence>
<name>RAB14_RAT</name>
<reference key="1">
    <citation type="journal article" date="1992" name="J. Biol. Chem.">
        <title>Rab15, a novel low molecular weight GTP-binding protein specifically expressed in rat brain.</title>
        <authorList>
            <person name="Elferink L.A."/>
            <person name="Anzai K."/>
            <person name="Scheller R.H."/>
        </authorList>
    </citation>
    <scope>NUCLEOTIDE SEQUENCE [MRNA]</scope>
    <source>
        <strain>Sprague-Dawley</strain>
        <tissue>Brain</tissue>
    </source>
</reference>
<reference key="2">
    <citation type="journal article" date="2004" name="Mol. Biol. Cell">
        <title>Rab14 is involved in membrane trafficking between the Golgi complex and endosomes.</title>
        <authorList>
            <person name="Junutula J.R."/>
            <person name="De Maziere A.M."/>
            <person name="Peden A.A."/>
            <person name="Ervin K.E."/>
            <person name="Advani R.J."/>
            <person name="van Dijk S.M."/>
            <person name="Klumperman J."/>
            <person name="Scheller R.H."/>
        </authorList>
    </citation>
    <scope>FUNCTION</scope>
    <scope>SUBCELLULAR LOCATION</scope>
    <scope>MUTAGENESIS OF SER-25; GLN-70 AND ASN-124</scope>
</reference>
<reference key="3">
    <citation type="journal article" date="2012" name="Nat. Commun.">
        <title>Quantitative maps of protein phosphorylation sites across 14 different rat organs and tissues.</title>
        <authorList>
            <person name="Lundby A."/>
            <person name="Secher A."/>
            <person name="Lage K."/>
            <person name="Nordsborg N.B."/>
            <person name="Dmytriyev A."/>
            <person name="Lundby C."/>
            <person name="Olsen J.V."/>
        </authorList>
    </citation>
    <scope>IDENTIFICATION BY MASS SPECTROMETRY [LARGE SCALE ANALYSIS]</scope>
</reference>
<dbReference type="EC" id="3.6.5.2" evidence="2"/>
<dbReference type="EMBL" id="M83680">
    <property type="protein sequence ID" value="AAA41994.1"/>
    <property type="molecule type" value="mRNA"/>
</dbReference>
<dbReference type="PIR" id="E42148">
    <property type="entry name" value="E42148"/>
</dbReference>
<dbReference type="RefSeq" id="NP_446041.1">
    <property type="nucleotide sequence ID" value="NM_053589.1"/>
</dbReference>
<dbReference type="SMR" id="P61107"/>
<dbReference type="BioGRID" id="250177">
    <property type="interactions" value="5"/>
</dbReference>
<dbReference type="FunCoup" id="P61107">
    <property type="interactions" value="3486"/>
</dbReference>
<dbReference type="IntAct" id="P61107">
    <property type="interactions" value="7"/>
</dbReference>
<dbReference type="MINT" id="P61107"/>
<dbReference type="STRING" id="10116.ENSRNOP00000025649"/>
<dbReference type="GlyGen" id="P61107">
    <property type="glycosylation" value="1 site"/>
</dbReference>
<dbReference type="iPTMnet" id="P61107"/>
<dbReference type="PhosphoSitePlus" id="P61107"/>
<dbReference type="SwissPalm" id="P61107"/>
<dbReference type="jPOST" id="P61107"/>
<dbReference type="PaxDb" id="10116-ENSRNOP00000025649"/>
<dbReference type="GeneID" id="94197"/>
<dbReference type="KEGG" id="rno:94197"/>
<dbReference type="UCSC" id="RGD:620881">
    <property type="organism name" value="rat"/>
</dbReference>
<dbReference type="AGR" id="RGD:620881"/>
<dbReference type="CTD" id="51552"/>
<dbReference type="RGD" id="620881">
    <property type="gene designation" value="Rab14"/>
</dbReference>
<dbReference type="eggNOG" id="KOG0097">
    <property type="taxonomic scope" value="Eukaryota"/>
</dbReference>
<dbReference type="InParanoid" id="P61107"/>
<dbReference type="OrthoDB" id="9989112at2759"/>
<dbReference type="PhylomeDB" id="P61107"/>
<dbReference type="Reactome" id="R-RNO-1660499">
    <property type="pathway name" value="Synthesis of PIPs at the plasma membrane"/>
</dbReference>
<dbReference type="Reactome" id="R-RNO-6798695">
    <property type="pathway name" value="Neutrophil degranulation"/>
</dbReference>
<dbReference type="Reactome" id="R-RNO-8873719">
    <property type="pathway name" value="RAB geranylgeranylation"/>
</dbReference>
<dbReference type="Reactome" id="R-RNO-8876198">
    <property type="pathway name" value="RAB GEFs exchange GTP for GDP on RABs"/>
</dbReference>
<dbReference type="PRO" id="PR:P61107"/>
<dbReference type="Proteomes" id="UP000002494">
    <property type="component" value="Unplaced"/>
</dbReference>
<dbReference type="GO" id="GO:0097208">
    <property type="term" value="C:alveolar lamellar body"/>
    <property type="evidence" value="ECO:0000314"/>
    <property type="project" value="RGD"/>
</dbReference>
<dbReference type="GO" id="GO:0016324">
    <property type="term" value="C:apical plasma membrane"/>
    <property type="evidence" value="ECO:0000314"/>
    <property type="project" value="RGD"/>
</dbReference>
<dbReference type="GO" id="GO:0030659">
    <property type="term" value="C:cytoplasmic vesicle membrane"/>
    <property type="evidence" value="ECO:0000304"/>
    <property type="project" value="Reactome"/>
</dbReference>
<dbReference type="GO" id="GO:0005829">
    <property type="term" value="C:cytosol"/>
    <property type="evidence" value="ECO:0000314"/>
    <property type="project" value="UniProtKB"/>
</dbReference>
<dbReference type="GO" id="GO:0005769">
    <property type="term" value="C:early endosome"/>
    <property type="evidence" value="ECO:0000314"/>
    <property type="project" value="UniProtKB"/>
</dbReference>
<dbReference type="GO" id="GO:0031901">
    <property type="term" value="C:early endosome membrane"/>
    <property type="evidence" value="ECO:0000266"/>
    <property type="project" value="RGD"/>
</dbReference>
<dbReference type="GO" id="GO:0012505">
    <property type="term" value="C:endomembrane system"/>
    <property type="evidence" value="ECO:0000318"/>
    <property type="project" value="GO_Central"/>
</dbReference>
<dbReference type="GO" id="GO:0000139">
    <property type="term" value="C:Golgi membrane"/>
    <property type="evidence" value="ECO:0007669"/>
    <property type="project" value="UniProtKB-SubCell"/>
</dbReference>
<dbReference type="GO" id="GO:0005795">
    <property type="term" value="C:Golgi stack"/>
    <property type="evidence" value="ECO:0000314"/>
    <property type="project" value="UniProtKB"/>
</dbReference>
<dbReference type="GO" id="GO:0005770">
    <property type="term" value="C:late endosome"/>
    <property type="evidence" value="ECO:0000314"/>
    <property type="project" value="UniProtKB"/>
</dbReference>
<dbReference type="GO" id="GO:0005764">
    <property type="term" value="C:lysosome"/>
    <property type="evidence" value="ECO:0000314"/>
    <property type="project" value="UniProtKB"/>
</dbReference>
<dbReference type="GO" id="GO:0042175">
    <property type="term" value="C:nuclear outer membrane-endoplasmic reticulum membrane network"/>
    <property type="evidence" value="ECO:0000314"/>
    <property type="project" value="UniProtKB"/>
</dbReference>
<dbReference type="GO" id="GO:0048471">
    <property type="term" value="C:perinuclear region of cytoplasm"/>
    <property type="evidence" value="ECO:0000314"/>
    <property type="project" value="UniProtKB"/>
</dbReference>
<dbReference type="GO" id="GO:0045335">
    <property type="term" value="C:phagocytic vesicle"/>
    <property type="evidence" value="ECO:0000250"/>
    <property type="project" value="UniProtKB"/>
</dbReference>
<dbReference type="GO" id="GO:0005886">
    <property type="term" value="C:plasma membrane"/>
    <property type="evidence" value="ECO:0000314"/>
    <property type="project" value="UniProtKB"/>
</dbReference>
<dbReference type="GO" id="GO:0055037">
    <property type="term" value="C:recycling endosome"/>
    <property type="evidence" value="ECO:0000250"/>
    <property type="project" value="UniProtKB"/>
</dbReference>
<dbReference type="GO" id="GO:0005791">
    <property type="term" value="C:rough endoplasmic reticulum"/>
    <property type="evidence" value="ECO:0000314"/>
    <property type="project" value="UniProtKB"/>
</dbReference>
<dbReference type="GO" id="GO:0030672">
    <property type="term" value="C:synaptic vesicle membrane"/>
    <property type="evidence" value="ECO:0000314"/>
    <property type="project" value="SynGO"/>
</dbReference>
<dbReference type="GO" id="GO:0005802">
    <property type="term" value="C:trans-Golgi network"/>
    <property type="evidence" value="ECO:0007669"/>
    <property type="project" value="InterPro"/>
</dbReference>
<dbReference type="GO" id="GO:0030140">
    <property type="term" value="C:trans-Golgi network transport vesicle"/>
    <property type="evidence" value="ECO:0000314"/>
    <property type="project" value="UniProtKB"/>
</dbReference>
<dbReference type="GO" id="GO:0003925">
    <property type="term" value="F:G protein activity"/>
    <property type="evidence" value="ECO:0000250"/>
    <property type="project" value="UniProtKB"/>
</dbReference>
<dbReference type="GO" id="GO:0019003">
    <property type="term" value="F:GDP binding"/>
    <property type="evidence" value="ECO:0000250"/>
    <property type="project" value="UniProtKB"/>
</dbReference>
<dbReference type="GO" id="GO:0005525">
    <property type="term" value="F:GTP binding"/>
    <property type="evidence" value="ECO:0000250"/>
    <property type="project" value="UniProtKB"/>
</dbReference>
<dbReference type="GO" id="GO:0003924">
    <property type="term" value="F:GTPase activity"/>
    <property type="evidence" value="ECO:0000250"/>
    <property type="project" value="UniProtKB"/>
</dbReference>
<dbReference type="GO" id="GO:0031489">
    <property type="term" value="F:myosin V binding"/>
    <property type="evidence" value="ECO:0000266"/>
    <property type="project" value="RGD"/>
</dbReference>
<dbReference type="GO" id="GO:0045176">
    <property type="term" value="P:apical protein localization"/>
    <property type="evidence" value="ECO:0000314"/>
    <property type="project" value="RGD"/>
</dbReference>
<dbReference type="GO" id="GO:0007589">
    <property type="term" value="P:body fluid secretion"/>
    <property type="evidence" value="ECO:0000315"/>
    <property type="project" value="RGD"/>
</dbReference>
<dbReference type="GO" id="GO:0042742">
    <property type="term" value="P:defense response to bacterium"/>
    <property type="evidence" value="ECO:0007669"/>
    <property type="project" value="InterPro"/>
</dbReference>
<dbReference type="GO" id="GO:0034498">
    <property type="term" value="P:early endosome to Golgi transport"/>
    <property type="evidence" value="ECO:0000266"/>
    <property type="project" value="RGD"/>
</dbReference>
<dbReference type="GO" id="GO:0032456">
    <property type="term" value="P:endocytic recycling"/>
    <property type="evidence" value="ECO:0000250"/>
    <property type="project" value="UniProtKB"/>
</dbReference>
<dbReference type="GO" id="GO:0034058">
    <property type="term" value="P:endosomal vesicle fusion"/>
    <property type="evidence" value="ECO:0000266"/>
    <property type="project" value="RGD"/>
</dbReference>
<dbReference type="GO" id="GO:0008543">
    <property type="term" value="P:fibroblast growth factor receptor signaling pathway"/>
    <property type="evidence" value="ECO:0000250"/>
    <property type="project" value="UniProtKB"/>
</dbReference>
<dbReference type="GO" id="GO:0006895">
    <property type="term" value="P:Golgi to endosome transport"/>
    <property type="evidence" value="ECO:0000250"/>
    <property type="project" value="UniProtKB"/>
</dbReference>
<dbReference type="GO" id="GO:0006886">
    <property type="term" value="P:intracellular protein transport"/>
    <property type="evidence" value="ECO:0000318"/>
    <property type="project" value="GO_Central"/>
</dbReference>
<dbReference type="GO" id="GO:0046907">
    <property type="term" value="P:intracellular transport"/>
    <property type="evidence" value="ECO:0000303"/>
    <property type="project" value="UniProtKB"/>
</dbReference>
<dbReference type="GO" id="GO:0001845">
    <property type="term" value="P:phagolysosome assembly"/>
    <property type="evidence" value="ECO:0000318"/>
    <property type="project" value="GO_Central"/>
</dbReference>
<dbReference type="GO" id="GO:0045995">
    <property type="term" value="P:regulation of embryonic development"/>
    <property type="evidence" value="ECO:0000250"/>
    <property type="project" value="UniProtKB"/>
</dbReference>
<dbReference type="GO" id="GO:0032880">
    <property type="term" value="P:regulation of protein localization"/>
    <property type="evidence" value="ECO:0000314"/>
    <property type="project" value="RGD"/>
</dbReference>
<dbReference type="GO" id="GO:0016192">
    <property type="term" value="P:vesicle-mediated transport"/>
    <property type="evidence" value="ECO:0000303"/>
    <property type="project" value="UniProtKB"/>
</dbReference>
<dbReference type="CDD" id="cd04122">
    <property type="entry name" value="Rab14"/>
    <property type="match status" value="1"/>
</dbReference>
<dbReference type="FunFam" id="3.40.50.300:FF:000344">
    <property type="entry name" value="Ras-related protein Rab-14"/>
    <property type="match status" value="1"/>
</dbReference>
<dbReference type="Gene3D" id="3.40.50.300">
    <property type="entry name" value="P-loop containing nucleotide triphosphate hydrolases"/>
    <property type="match status" value="1"/>
</dbReference>
<dbReference type="InterPro" id="IPR027417">
    <property type="entry name" value="P-loop_NTPase"/>
</dbReference>
<dbReference type="InterPro" id="IPR030702">
    <property type="entry name" value="Rab14"/>
</dbReference>
<dbReference type="InterPro" id="IPR050209">
    <property type="entry name" value="Rab_GTPases_membrane_traffic"/>
</dbReference>
<dbReference type="InterPro" id="IPR005225">
    <property type="entry name" value="Small_GTP-bd"/>
</dbReference>
<dbReference type="InterPro" id="IPR001806">
    <property type="entry name" value="Small_GTPase"/>
</dbReference>
<dbReference type="NCBIfam" id="TIGR00231">
    <property type="entry name" value="small_GTP"/>
    <property type="match status" value="1"/>
</dbReference>
<dbReference type="PANTHER" id="PTHR47979">
    <property type="entry name" value="DRAB11-RELATED"/>
    <property type="match status" value="1"/>
</dbReference>
<dbReference type="Pfam" id="PF00071">
    <property type="entry name" value="Ras"/>
    <property type="match status" value="1"/>
</dbReference>
<dbReference type="PRINTS" id="PR00449">
    <property type="entry name" value="RASTRNSFRMNG"/>
</dbReference>
<dbReference type="SMART" id="SM00175">
    <property type="entry name" value="RAB"/>
    <property type="match status" value="1"/>
</dbReference>
<dbReference type="SMART" id="SM00176">
    <property type="entry name" value="RAN"/>
    <property type="match status" value="1"/>
</dbReference>
<dbReference type="SMART" id="SM00173">
    <property type="entry name" value="RAS"/>
    <property type="match status" value="1"/>
</dbReference>
<dbReference type="SMART" id="SM00174">
    <property type="entry name" value="RHO"/>
    <property type="match status" value="1"/>
</dbReference>
<dbReference type="SUPFAM" id="SSF52540">
    <property type="entry name" value="P-loop containing nucleoside triphosphate hydrolases"/>
    <property type="match status" value="1"/>
</dbReference>
<dbReference type="PROSITE" id="PS51419">
    <property type="entry name" value="RAB"/>
    <property type="match status" value="1"/>
</dbReference>
<proteinExistence type="evidence at protein level"/>
<sequence length="215" mass="23927">MATTPYNYSYIFKYIIIGDMGVGKSCLLHQFTEKKFMADCPHTIGVEFGTRIIEVSGQKIKLQIWDTAGQERFRAVTRSYYRGAAGALMVYDITRRSTYNHLSSWLTDARNLTNPNTVIILIGNKADLEAQRDVTYEEAKQFAEENGLLFLEASAKTGENVEDAFLEAAKKIYQNIQDGSLDLNAAESGVQHKPSAPQGGRLTSEPQPQREGCGC</sequence>